<organism>
    <name type="scientific">Escherichia coli O139:H28 (strain E24377A / ETEC)</name>
    <dbReference type="NCBI Taxonomy" id="331111"/>
    <lineage>
        <taxon>Bacteria</taxon>
        <taxon>Pseudomonadati</taxon>
        <taxon>Pseudomonadota</taxon>
        <taxon>Gammaproteobacteria</taxon>
        <taxon>Enterobacterales</taxon>
        <taxon>Enterobacteriaceae</taxon>
        <taxon>Escherichia</taxon>
    </lineage>
</organism>
<evidence type="ECO:0000255" key="1">
    <source>
        <dbReference type="HAMAP-Rule" id="MF_01277"/>
    </source>
</evidence>
<name>PURR_ECO24</name>
<protein>
    <recommendedName>
        <fullName evidence="1">HTH-type transcriptional repressor PurR</fullName>
    </recommendedName>
    <alternativeName>
        <fullName evidence="1">Pur regulon repressor</fullName>
    </alternativeName>
    <alternativeName>
        <fullName evidence="1">Purine nucleotide synthesis repressor</fullName>
    </alternativeName>
</protein>
<sequence length="341" mass="38191">MATIKDVAKRANVSTTTVSHVINKTRFVSEETRNAVWAAIKELHYSPSAVARSLKVNHTKSIGLLATSSEAAYFAEIIEAVEKNCFQKGYTLILGNAWNNLEKQRAYLSMMAQKRVDGLLVMCSEYPEPLLAMLEEYRHIPMVVMDWGEAKADFTDAVIDNAFEGGYMAGRYLIERGHREIGVIPGPLERNTGAGRLAGFMKAMEEAMIKVPESWIVQGDFEPESGYRAMQQILSQPHRPTAVFCGGDIMAMGALCAADEMGLRVPQDVSLIGYDNVRNARYFTPALTTIHQPKDSLGETAFNMLLDRIVNKREEPQSIEVHPRLIERRSVADGPFRDYRR</sequence>
<gene>
    <name evidence="1" type="primary">purR</name>
    <name type="ordered locus">EcE24377A_1873</name>
</gene>
<dbReference type="EMBL" id="CP000800">
    <property type="protein sequence ID" value="ABV19172.1"/>
    <property type="molecule type" value="Genomic_DNA"/>
</dbReference>
<dbReference type="RefSeq" id="WP_000190999.1">
    <property type="nucleotide sequence ID" value="NC_009801.1"/>
</dbReference>
<dbReference type="SMR" id="A7ZMC4"/>
<dbReference type="KEGG" id="ecw:EcE24377A_1873"/>
<dbReference type="HOGENOM" id="CLU_037628_6_2_6"/>
<dbReference type="UniPathway" id="UPA00488"/>
<dbReference type="Proteomes" id="UP000001122">
    <property type="component" value="Chromosome"/>
</dbReference>
<dbReference type="GO" id="GO:0003700">
    <property type="term" value="F:DNA-binding transcription factor activity"/>
    <property type="evidence" value="ECO:0007669"/>
    <property type="project" value="TreeGrafter"/>
</dbReference>
<dbReference type="GO" id="GO:0000976">
    <property type="term" value="F:transcription cis-regulatory region binding"/>
    <property type="evidence" value="ECO:0007669"/>
    <property type="project" value="TreeGrafter"/>
</dbReference>
<dbReference type="GO" id="GO:0045892">
    <property type="term" value="P:negative regulation of DNA-templated transcription"/>
    <property type="evidence" value="ECO:0007669"/>
    <property type="project" value="UniProtKB-UniRule"/>
</dbReference>
<dbReference type="GO" id="GO:0006164">
    <property type="term" value="P:purine nucleotide biosynthetic process"/>
    <property type="evidence" value="ECO:0007669"/>
    <property type="project" value="UniProtKB-UniPathway"/>
</dbReference>
<dbReference type="CDD" id="cd01392">
    <property type="entry name" value="HTH_LacI"/>
    <property type="match status" value="1"/>
</dbReference>
<dbReference type="CDD" id="cd06275">
    <property type="entry name" value="PBP1_PurR"/>
    <property type="match status" value="1"/>
</dbReference>
<dbReference type="FunFam" id="1.10.260.40:FF:000002">
    <property type="entry name" value="HTH-type transcriptional repressor PurR"/>
    <property type="match status" value="1"/>
</dbReference>
<dbReference type="FunFam" id="3.40.50.2300:FF:000045">
    <property type="entry name" value="HTH-type transcriptional repressor PurR"/>
    <property type="match status" value="1"/>
</dbReference>
<dbReference type="Gene3D" id="3.40.50.2300">
    <property type="match status" value="2"/>
</dbReference>
<dbReference type="Gene3D" id="1.10.260.40">
    <property type="entry name" value="lambda repressor-like DNA-binding domains"/>
    <property type="match status" value="1"/>
</dbReference>
<dbReference type="HAMAP" id="MF_01277">
    <property type="entry name" value="HTH_type_PurR"/>
    <property type="match status" value="1"/>
</dbReference>
<dbReference type="InterPro" id="IPR000843">
    <property type="entry name" value="HTH_LacI"/>
</dbReference>
<dbReference type="InterPro" id="IPR046335">
    <property type="entry name" value="LacI/GalR-like_sensor"/>
</dbReference>
<dbReference type="InterPro" id="IPR010982">
    <property type="entry name" value="Lambda_DNA-bd_dom_sf"/>
</dbReference>
<dbReference type="InterPro" id="IPR028082">
    <property type="entry name" value="Peripla_BP_I"/>
</dbReference>
<dbReference type="InterPro" id="IPR023588">
    <property type="entry name" value="Tscrpt_reg_HTH_PurR"/>
</dbReference>
<dbReference type="NCBIfam" id="NF007979">
    <property type="entry name" value="PRK10703.1"/>
    <property type="match status" value="1"/>
</dbReference>
<dbReference type="PANTHER" id="PTHR30146:SF148">
    <property type="entry name" value="HTH-TYPE TRANSCRIPTIONAL REPRESSOR PURR-RELATED"/>
    <property type="match status" value="1"/>
</dbReference>
<dbReference type="PANTHER" id="PTHR30146">
    <property type="entry name" value="LACI-RELATED TRANSCRIPTIONAL REPRESSOR"/>
    <property type="match status" value="1"/>
</dbReference>
<dbReference type="Pfam" id="PF00356">
    <property type="entry name" value="LacI"/>
    <property type="match status" value="1"/>
</dbReference>
<dbReference type="Pfam" id="PF13377">
    <property type="entry name" value="Peripla_BP_3"/>
    <property type="match status" value="1"/>
</dbReference>
<dbReference type="PRINTS" id="PR00036">
    <property type="entry name" value="HTHLACI"/>
</dbReference>
<dbReference type="SMART" id="SM00354">
    <property type="entry name" value="HTH_LACI"/>
    <property type="match status" value="1"/>
</dbReference>
<dbReference type="SUPFAM" id="SSF47413">
    <property type="entry name" value="lambda repressor-like DNA-binding domains"/>
    <property type="match status" value="1"/>
</dbReference>
<dbReference type="SUPFAM" id="SSF53822">
    <property type="entry name" value="Periplasmic binding protein-like I"/>
    <property type="match status" value="1"/>
</dbReference>
<dbReference type="PROSITE" id="PS00356">
    <property type="entry name" value="HTH_LACI_1"/>
    <property type="match status" value="1"/>
</dbReference>
<dbReference type="PROSITE" id="PS50932">
    <property type="entry name" value="HTH_LACI_2"/>
    <property type="match status" value="1"/>
</dbReference>
<feature type="chain" id="PRO_1000085867" description="HTH-type transcriptional repressor PurR">
    <location>
        <begin position="1"/>
        <end position="341"/>
    </location>
</feature>
<feature type="domain" description="HTH lacI-type" evidence="1">
    <location>
        <begin position="2"/>
        <end position="56"/>
    </location>
</feature>
<feature type="DNA-binding region" description="H-T-H motif" evidence="1">
    <location>
        <begin position="4"/>
        <end position="23"/>
    </location>
</feature>
<feature type="DNA-binding region" evidence="1">
    <location>
        <begin position="48"/>
        <end position="56"/>
    </location>
</feature>
<feature type="binding site" evidence="1">
    <location>
        <position position="73"/>
    </location>
    <ligand>
        <name>hypoxanthine</name>
        <dbReference type="ChEBI" id="CHEBI:17368"/>
    </ligand>
</feature>
<feature type="binding site" evidence="1">
    <location>
        <position position="190"/>
    </location>
    <ligand>
        <name>hypoxanthine</name>
        <dbReference type="ChEBI" id="CHEBI:17368"/>
    </ligand>
</feature>
<feature type="binding site" evidence="1">
    <location>
        <position position="192"/>
    </location>
    <ligand>
        <name>hypoxanthine</name>
        <dbReference type="ChEBI" id="CHEBI:17368"/>
    </ligand>
</feature>
<feature type="binding site" evidence="1">
    <location>
        <position position="221"/>
    </location>
    <ligand>
        <name>hypoxanthine</name>
        <dbReference type="ChEBI" id="CHEBI:17368"/>
    </ligand>
</feature>
<feature type="binding site" evidence="1">
    <location>
        <position position="275"/>
    </location>
    <ligand>
        <name>hypoxanthine</name>
        <dbReference type="ChEBI" id="CHEBI:17368"/>
    </ligand>
</feature>
<comment type="function">
    <text evidence="1">Is the main repressor of the genes involved in the de novo synthesis of purine nucleotides, regulating purB, purC, purEK, purF, purHD, purL, purMN and guaBA expression. PurR is allosterically activated to bind its cognate DNA by binding the purine corepressors, hypoxanthine or guanine, thereby effecting transcription repression.</text>
</comment>
<comment type="pathway">
    <text>Purine metabolism; purine nucleotide biosynthesis [regulation].</text>
</comment>
<comment type="subunit">
    <text evidence="1">Homodimer.</text>
</comment>
<comment type="domain">
    <text evidence="1">Consists of two structural and functional domains: an N-terminal DNA-binding domain, approximately the first 60 residues, and a larger C-terminal domain, approximately 280 residues, which imparts the function of corepressor binding and oligomerization.</text>
</comment>
<reference key="1">
    <citation type="journal article" date="2008" name="J. Bacteriol.">
        <title>The pangenome structure of Escherichia coli: comparative genomic analysis of E. coli commensal and pathogenic isolates.</title>
        <authorList>
            <person name="Rasko D.A."/>
            <person name="Rosovitz M.J."/>
            <person name="Myers G.S.A."/>
            <person name="Mongodin E.F."/>
            <person name="Fricke W.F."/>
            <person name="Gajer P."/>
            <person name="Crabtree J."/>
            <person name="Sebaihia M."/>
            <person name="Thomson N.R."/>
            <person name="Chaudhuri R."/>
            <person name="Henderson I.R."/>
            <person name="Sperandio V."/>
            <person name="Ravel J."/>
        </authorList>
    </citation>
    <scope>NUCLEOTIDE SEQUENCE [LARGE SCALE GENOMIC DNA]</scope>
    <source>
        <strain>E24377A / ETEC</strain>
    </source>
</reference>
<accession>A7ZMC4</accession>
<proteinExistence type="inferred from homology"/>
<keyword id="KW-0238">DNA-binding</keyword>
<keyword id="KW-0658">Purine biosynthesis</keyword>
<keyword id="KW-1185">Reference proteome</keyword>
<keyword id="KW-0678">Repressor</keyword>
<keyword id="KW-0804">Transcription</keyword>
<keyword id="KW-0805">Transcription regulation</keyword>